<comment type="function">
    <text evidence="1">Fluoride-specific ion channel. Important for reducing fluoride concentration in the cell, thus reducing its toxicity.</text>
</comment>
<comment type="catalytic activity">
    <reaction evidence="1">
        <text>fluoride(in) = fluoride(out)</text>
        <dbReference type="Rhea" id="RHEA:76159"/>
        <dbReference type="ChEBI" id="CHEBI:17051"/>
    </reaction>
    <physiologicalReaction direction="left-to-right" evidence="1">
        <dbReference type="Rhea" id="RHEA:76160"/>
    </physiologicalReaction>
</comment>
<comment type="activity regulation">
    <text evidence="1">Na(+) is not transported, but it plays an essential structural role and its presence is essential for fluoride channel function.</text>
</comment>
<comment type="subcellular location">
    <subcellularLocation>
        <location evidence="1">Cell inner membrane</location>
        <topology evidence="1">Multi-pass membrane protein</topology>
    </subcellularLocation>
</comment>
<comment type="similarity">
    <text evidence="1">Belongs to the fluoride channel Fluc/FEX (TC 1.A.43) family.</text>
</comment>
<proteinExistence type="inferred from homology"/>
<dbReference type="EMBL" id="CP000026">
    <property type="protein sequence ID" value="AAV77998.1"/>
    <property type="molecule type" value="Genomic_DNA"/>
</dbReference>
<dbReference type="RefSeq" id="WP_000939753.1">
    <property type="nucleotide sequence ID" value="NC_006511.1"/>
</dbReference>
<dbReference type="SMR" id="Q5PM94"/>
<dbReference type="KEGG" id="spt:SPA2104"/>
<dbReference type="HOGENOM" id="CLU_114342_3_3_6"/>
<dbReference type="Proteomes" id="UP000008185">
    <property type="component" value="Chromosome"/>
</dbReference>
<dbReference type="GO" id="GO:0005886">
    <property type="term" value="C:plasma membrane"/>
    <property type="evidence" value="ECO:0007669"/>
    <property type="project" value="UniProtKB-SubCell"/>
</dbReference>
<dbReference type="GO" id="GO:0062054">
    <property type="term" value="F:fluoride channel activity"/>
    <property type="evidence" value="ECO:0007669"/>
    <property type="project" value="UniProtKB-UniRule"/>
</dbReference>
<dbReference type="GO" id="GO:0046872">
    <property type="term" value="F:metal ion binding"/>
    <property type="evidence" value="ECO:0007669"/>
    <property type="project" value="UniProtKB-KW"/>
</dbReference>
<dbReference type="GO" id="GO:0140114">
    <property type="term" value="P:cellular detoxification of fluoride"/>
    <property type="evidence" value="ECO:0007669"/>
    <property type="project" value="UniProtKB-UniRule"/>
</dbReference>
<dbReference type="HAMAP" id="MF_00454">
    <property type="entry name" value="FluC"/>
    <property type="match status" value="1"/>
</dbReference>
<dbReference type="InterPro" id="IPR003691">
    <property type="entry name" value="FluC"/>
</dbReference>
<dbReference type="NCBIfam" id="TIGR00494">
    <property type="entry name" value="crcB"/>
    <property type="match status" value="1"/>
</dbReference>
<dbReference type="NCBIfam" id="NF010792">
    <property type="entry name" value="PRK14196.1"/>
    <property type="match status" value="1"/>
</dbReference>
<dbReference type="PANTHER" id="PTHR28259">
    <property type="entry name" value="FLUORIDE EXPORT PROTEIN 1-RELATED"/>
    <property type="match status" value="1"/>
</dbReference>
<dbReference type="PANTHER" id="PTHR28259:SF1">
    <property type="entry name" value="FLUORIDE EXPORT PROTEIN 1-RELATED"/>
    <property type="match status" value="1"/>
</dbReference>
<dbReference type="Pfam" id="PF02537">
    <property type="entry name" value="CRCB"/>
    <property type="match status" value="1"/>
</dbReference>
<reference key="1">
    <citation type="journal article" date="2004" name="Nat. Genet.">
        <title>Comparison of genome degradation in Paratyphi A and Typhi, human-restricted serovars of Salmonella enterica that cause typhoid.</title>
        <authorList>
            <person name="McClelland M."/>
            <person name="Sanderson K.E."/>
            <person name="Clifton S.W."/>
            <person name="Latreille P."/>
            <person name="Porwollik S."/>
            <person name="Sabo A."/>
            <person name="Meyer R."/>
            <person name="Bieri T."/>
            <person name="Ozersky P."/>
            <person name="McLellan M."/>
            <person name="Harkins C.R."/>
            <person name="Wang C."/>
            <person name="Nguyen C."/>
            <person name="Berghoff A."/>
            <person name="Elliott G."/>
            <person name="Kohlberg S."/>
            <person name="Strong C."/>
            <person name="Du F."/>
            <person name="Carter J."/>
            <person name="Kremizki C."/>
            <person name="Layman D."/>
            <person name="Leonard S."/>
            <person name="Sun H."/>
            <person name="Fulton L."/>
            <person name="Nash W."/>
            <person name="Miner T."/>
            <person name="Minx P."/>
            <person name="Delehaunty K."/>
            <person name="Fronick C."/>
            <person name="Magrini V."/>
            <person name="Nhan M."/>
            <person name="Warren W."/>
            <person name="Florea L."/>
            <person name="Spieth J."/>
            <person name="Wilson R.K."/>
        </authorList>
    </citation>
    <scope>NUCLEOTIDE SEQUENCE [LARGE SCALE GENOMIC DNA]</scope>
    <source>
        <strain>ATCC 9150 / SARB42</strain>
    </source>
</reference>
<sequence>MLQLLLAVFIGGGTGSVARWMLSMRFNPLHQAIPIGTLTANLLGAFIIGMGFAWFNRMTHIDPMWKVLITTGFCGGLTTFSTFSAEVVFLLQEGRFGWALLNVLINLLGSFAMTALAFWLFSAAAAR</sequence>
<organism>
    <name type="scientific">Salmonella paratyphi A (strain ATCC 9150 / SARB42)</name>
    <dbReference type="NCBI Taxonomy" id="295319"/>
    <lineage>
        <taxon>Bacteria</taxon>
        <taxon>Pseudomonadati</taxon>
        <taxon>Pseudomonadota</taxon>
        <taxon>Gammaproteobacteria</taxon>
        <taxon>Enterobacterales</taxon>
        <taxon>Enterobacteriaceae</taxon>
        <taxon>Salmonella</taxon>
    </lineage>
</organism>
<name>FLUC_SALPA</name>
<gene>
    <name evidence="1" type="primary">fluC</name>
    <name evidence="1" type="synonym">crcB</name>
    <name type="ordered locus">SPA2104</name>
</gene>
<protein>
    <recommendedName>
        <fullName evidence="1">Fluoride-specific ion channel FluC</fullName>
    </recommendedName>
</protein>
<evidence type="ECO:0000255" key="1">
    <source>
        <dbReference type="HAMAP-Rule" id="MF_00454"/>
    </source>
</evidence>
<feature type="chain" id="PRO_0000110167" description="Fluoride-specific ion channel FluC">
    <location>
        <begin position="1"/>
        <end position="127"/>
    </location>
</feature>
<feature type="transmembrane region" description="Helical" evidence="1">
    <location>
        <begin position="4"/>
        <end position="24"/>
    </location>
</feature>
<feature type="transmembrane region" description="Helical" evidence="1">
    <location>
        <begin position="35"/>
        <end position="55"/>
    </location>
</feature>
<feature type="transmembrane region" description="Helical" evidence="1">
    <location>
        <begin position="71"/>
        <end position="91"/>
    </location>
</feature>
<feature type="transmembrane region" description="Helical" evidence="1">
    <location>
        <begin position="103"/>
        <end position="123"/>
    </location>
</feature>
<feature type="binding site" evidence="1">
    <location>
        <position position="75"/>
    </location>
    <ligand>
        <name>Na(+)</name>
        <dbReference type="ChEBI" id="CHEBI:29101"/>
        <note>structural</note>
    </ligand>
</feature>
<feature type="binding site" evidence="1">
    <location>
        <position position="78"/>
    </location>
    <ligand>
        <name>Na(+)</name>
        <dbReference type="ChEBI" id="CHEBI:29101"/>
        <note>structural</note>
    </ligand>
</feature>
<keyword id="KW-0997">Cell inner membrane</keyword>
<keyword id="KW-1003">Cell membrane</keyword>
<keyword id="KW-0407">Ion channel</keyword>
<keyword id="KW-0406">Ion transport</keyword>
<keyword id="KW-0472">Membrane</keyword>
<keyword id="KW-0479">Metal-binding</keyword>
<keyword id="KW-0915">Sodium</keyword>
<keyword id="KW-0812">Transmembrane</keyword>
<keyword id="KW-1133">Transmembrane helix</keyword>
<keyword id="KW-0813">Transport</keyword>
<accession>Q5PM94</accession>